<evidence type="ECO:0000255" key="1"/>
<evidence type="ECO:0000255" key="2">
    <source>
        <dbReference type="PROSITE-ProRule" id="PRU00703"/>
    </source>
</evidence>
<evidence type="ECO:0000255" key="3">
    <source>
        <dbReference type="PROSITE-ProRule" id="PRU00797"/>
    </source>
</evidence>
<evidence type="ECO:0000305" key="4"/>
<name>Y399_CHLTR</name>
<reference key="1">
    <citation type="journal article" date="1998" name="Science">
        <title>Genome sequence of an obligate intracellular pathogen of humans: Chlamydia trachomatis.</title>
        <authorList>
            <person name="Stephens R.S."/>
            <person name="Kalman S."/>
            <person name="Lammel C.J."/>
            <person name="Fan J."/>
            <person name="Marathe R."/>
            <person name="Aravind L."/>
            <person name="Mitchell W.P."/>
            <person name="Olinger L."/>
            <person name="Tatusov R.L."/>
            <person name="Zhao Q."/>
            <person name="Koonin E.V."/>
            <person name="Davis R.W."/>
        </authorList>
    </citation>
    <scope>NUCLEOTIDE SEQUENCE [LARGE SCALE GENOMIC DNA]</scope>
    <source>
        <strain>ATCC VR-885 / DSM 19411 / UW-3/Cx</strain>
    </source>
</reference>
<sequence length="328" mass="36021">MYVPGIAENLCLDIFHKQKQVISQYFASFHYDCVHQLTEKLLCHQGSLFFSGIGKSGCIARKLVATMQSFGEKAFFLSGDLLHGDLGVVSPGDIVCLFSNSGETREILEWIPHLKNRPVFLVGITAAPCSSLAAFSDFVIVLPKLEELDPFNLMPTTSTTCQLLFSDLLAMTLLRCRKISLSDYGSNHPSGQIGLKANGKVKDYLYPRTEVPFCSPLTTVAESLPTLSSYGYGCVCVVNELFELLGIFTDGDLRRGLSEYGGDILAYPLQQIMTRNPKVISEDSDVLLSLEMMESGNPVTVLPVVDAQQQRFIVGLLHMHALARAGLL</sequence>
<organism>
    <name type="scientific">Chlamydia trachomatis serovar D (strain ATCC VR-885 / DSM 19411 / UW-3/Cx)</name>
    <dbReference type="NCBI Taxonomy" id="272561"/>
    <lineage>
        <taxon>Bacteria</taxon>
        <taxon>Pseudomonadati</taxon>
        <taxon>Chlamydiota</taxon>
        <taxon>Chlamydiia</taxon>
        <taxon>Chlamydiales</taxon>
        <taxon>Chlamydiaceae</taxon>
        <taxon>Chlamydia/Chlamydophila group</taxon>
        <taxon>Chlamydia</taxon>
    </lineage>
</organism>
<proteinExistence type="inferred from homology"/>
<gene>
    <name type="ordered locus">CT_399</name>
</gene>
<feature type="chain" id="PRO_0000136586" description="Uncharacterized protein CT_399">
    <location>
        <begin position="1"/>
        <end position="328"/>
    </location>
</feature>
<feature type="domain" description="SIS" evidence="3">
    <location>
        <begin position="37"/>
        <end position="179"/>
    </location>
</feature>
<feature type="domain" description="CBS 1" evidence="2">
    <location>
        <begin position="207"/>
        <end position="264"/>
    </location>
</feature>
<feature type="domain" description="CBS 2" evidence="2">
    <location>
        <begin position="273"/>
        <end position="328"/>
    </location>
</feature>
<feature type="binding site" evidence="1">
    <location>
        <begin position="52"/>
        <end position="57"/>
    </location>
    <ligand>
        <name>ATP</name>
        <dbReference type="ChEBI" id="CHEBI:30616"/>
    </ligand>
</feature>
<protein>
    <recommendedName>
        <fullName>Uncharacterized protein CT_399</fullName>
    </recommendedName>
</protein>
<comment type="similarity">
    <text evidence="4">Belongs to the SIS family. GutQ/KpsF subfamily.</text>
</comment>
<accession>O84404</accession>
<keyword id="KW-0067">ATP-binding</keyword>
<keyword id="KW-0129">CBS domain</keyword>
<keyword id="KW-0547">Nucleotide-binding</keyword>
<keyword id="KW-1185">Reference proteome</keyword>
<keyword id="KW-0677">Repeat</keyword>
<dbReference type="EMBL" id="AE001273">
    <property type="protein sequence ID" value="AAC67996.1"/>
    <property type="molecule type" value="Genomic_DNA"/>
</dbReference>
<dbReference type="PIR" id="B71519">
    <property type="entry name" value="B71519"/>
</dbReference>
<dbReference type="RefSeq" id="WP_009871751.1">
    <property type="nucleotide sequence ID" value="NC_000117.1"/>
</dbReference>
<dbReference type="SMR" id="O84404"/>
<dbReference type="STRING" id="272561.CT_399"/>
<dbReference type="EnsemblBacteria" id="AAC67996">
    <property type="protein sequence ID" value="AAC67996"/>
    <property type="gene ID" value="CT_399"/>
</dbReference>
<dbReference type="KEGG" id="ctr:CT_399"/>
<dbReference type="PATRIC" id="fig|272561.5.peg.430"/>
<dbReference type="HOGENOM" id="CLU_040681_13_2_0"/>
<dbReference type="InParanoid" id="O84404"/>
<dbReference type="OrthoDB" id="9762536at2"/>
<dbReference type="Proteomes" id="UP000000431">
    <property type="component" value="Chromosome"/>
</dbReference>
<dbReference type="GO" id="GO:0005524">
    <property type="term" value="F:ATP binding"/>
    <property type="evidence" value="ECO:0007669"/>
    <property type="project" value="UniProtKB-KW"/>
</dbReference>
<dbReference type="GO" id="GO:0016853">
    <property type="term" value="F:isomerase activity"/>
    <property type="evidence" value="ECO:0007669"/>
    <property type="project" value="InterPro"/>
</dbReference>
<dbReference type="GO" id="GO:1901135">
    <property type="term" value="P:carbohydrate derivative metabolic process"/>
    <property type="evidence" value="ECO:0007669"/>
    <property type="project" value="InterPro"/>
</dbReference>
<dbReference type="GO" id="GO:0005975">
    <property type="term" value="P:carbohydrate metabolic process"/>
    <property type="evidence" value="ECO:0007669"/>
    <property type="project" value="InterPro"/>
</dbReference>
<dbReference type="CDD" id="cd04604">
    <property type="entry name" value="CBS_pair_SIS_assoc"/>
    <property type="match status" value="1"/>
</dbReference>
<dbReference type="CDD" id="cd05014">
    <property type="entry name" value="SIS_Kpsf"/>
    <property type="match status" value="1"/>
</dbReference>
<dbReference type="Gene3D" id="3.10.580.10">
    <property type="entry name" value="CBS-domain"/>
    <property type="match status" value="1"/>
</dbReference>
<dbReference type="Gene3D" id="3.40.50.10490">
    <property type="entry name" value="Glucose-6-phosphate isomerase like protein, domain 1"/>
    <property type="match status" value="1"/>
</dbReference>
<dbReference type="InterPro" id="IPR000644">
    <property type="entry name" value="CBS_dom"/>
</dbReference>
<dbReference type="InterPro" id="IPR046342">
    <property type="entry name" value="CBS_dom_sf"/>
</dbReference>
<dbReference type="InterPro" id="IPR004800">
    <property type="entry name" value="KdsD/KpsF-type"/>
</dbReference>
<dbReference type="InterPro" id="IPR001347">
    <property type="entry name" value="SIS_dom"/>
</dbReference>
<dbReference type="InterPro" id="IPR046348">
    <property type="entry name" value="SIS_dom_sf"/>
</dbReference>
<dbReference type="InterPro" id="IPR035474">
    <property type="entry name" value="SIS_Kpsf"/>
</dbReference>
<dbReference type="NCBIfam" id="TIGR00393">
    <property type="entry name" value="kpsF"/>
    <property type="match status" value="1"/>
</dbReference>
<dbReference type="PANTHER" id="PTHR47476">
    <property type="match status" value="1"/>
</dbReference>
<dbReference type="PANTHER" id="PTHR47476:SF2">
    <property type="entry name" value="ARABINOSE 5-PHOSPHATE ISOMERASE-RELATED"/>
    <property type="match status" value="1"/>
</dbReference>
<dbReference type="Pfam" id="PF00571">
    <property type="entry name" value="CBS"/>
    <property type="match status" value="2"/>
</dbReference>
<dbReference type="Pfam" id="PF01380">
    <property type="entry name" value="SIS"/>
    <property type="match status" value="1"/>
</dbReference>
<dbReference type="PIRSF" id="PIRSF004692">
    <property type="entry name" value="KdsD_KpsF"/>
    <property type="match status" value="1"/>
</dbReference>
<dbReference type="SUPFAM" id="SSF53697">
    <property type="entry name" value="SIS domain"/>
    <property type="match status" value="1"/>
</dbReference>
<dbReference type="PROSITE" id="PS51371">
    <property type="entry name" value="CBS"/>
    <property type="match status" value="2"/>
</dbReference>
<dbReference type="PROSITE" id="PS51464">
    <property type="entry name" value="SIS"/>
    <property type="match status" value="1"/>
</dbReference>